<gene>
    <name evidence="1" type="primary">glyS</name>
    <name type="ordered locus">SDY_4345</name>
</gene>
<evidence type="ECO:0000255" key="1">
    <source>
        <dbReference type="HAMAP-Rule" id="MF_00255"/>
    </source>
</evidence>
<dbReference type="EC" id="6.1.1.14" evidence="1"/>
<dbReference type="EMBL" id="CP000034">
    <property type="protein sequence ID" value="ABB64236.1"/>
    <property type="molecule type" value="Genomic_DNA"/>
</dbReference>
<dbReference type="RefSeq" id="WP_001291760.1">
    <property type="nucleotide sequence ID" value="NC_007606.1"/>
</dbReference>
<dbReference type="RefSeq" id="YP_405727.1">
    <property type="nucleotide sequence ID" value="NC_007606.1"/>
</dbReference>
<dbReference type="SMR" id="Q328L9"/>
<dbReference type="STRING" id="300267.SDY_4345"/>
<dbReference type="EnsemblBacteria" id="ABB64236">
    <property type="protein sequence ID" value="ABB64236"/>
    <property type="gene ID" value="SDY_4345"/>
</dbReference>
<dbReference type="KEGG" id="sdy:SDY_4345"/>
<dbReference type="PATRIC" id="fig|300267.13.peg.5129"/>
<dbReference type="HOGENOM" id="CLU_007220_2_2_6"/>
<dbReference type="Proteomes" id="UP000002716">
    <property type="component" value="Chromosome"/>
</dbReference>
<dbReference type="GO" id="GO:0005829">
    <property type="term" value="C:cytosol"/>
    <property type="evidence" value="ECO:0007669"/>
    <property type="project" value="TreeGrafter"/>
</dbReference>
<dbReference type="GO" id="GO:0004814">
    <property type="term" value="F:arginine-tRNA ligase activity"/>
    <property type="evidence" value="ECO:0007669"/>
    <property type="project" value="InterPro"/>
</dbReference>
<dbReference type="GO" id="GO:0005524">
    <property type="term" value="F:ATP binding"/>
    <property type="evidence" value="ECO:0007669"/>
    <property type="project" value="UniProtKB-UniRule"/>
</dbReference>
<dbReference type="GO" id="GO:0004820">
    <property type="term" value="F:glycine-tRNA ligase activity"/>
    <property type="evidence" value="ECO:0007669"/>
    <property type="project" value="UniProtKB-UniRule"/>
</dbReference>
<dbReference type="GO" id="GO:0006420">
    <property type="term" value="P:arginyl-tRNA aminoacylation"/>
    <property type="evidence" value="ECO:0007669"/>
    <property type="project" value="InterPro"/>
</dbReference>
<dbReference type="GO" id="GO:0006426">
    <property type="term" value="P:glycyl-tRNA aminoacylation"/>
    <property type="evidence" value="ECO:0007669"/>
    <property type="project" value="UniProtKB-UniRule"/>
</dbReference>
<dbReference type="HAMAP" id="MF_00255">
    <property type="entry name" value="Gly_tRNA_synth_beta"/>
    <property type="match status" value="1"/>
</dbReference>
<dbReference type="InterPro" id="IPR008909">
    <property type="entry name" value="DALR_anticod-bd"/>
</dbReference>
<dbReference type="InterPro" id="IPR015944">
    <property type="entry name" value="Gly-tRNA-synth_bsu"/>
</dbReference>
<dbReference type="InterPro" id="IPR006194">
    <property type="entry name" value="Gly-tRNA-synth_heterodimer"/>
</dbReference>
<dbReference type="NCBIfam" id="TIGR00211">
    <property type="entry name" value="glyS"/>
    <property type="match status" value="1"/>
</dbReference>
<dbReference type="PANTHER" id="PTHR30075:SF2">
    <property type="entry name" value="GLYCINE--TRNA LIGASE, CHLOROPLASTIC_MITOCHONDRIAL 2"/>
    <property type="match status" value="1"/>
</dbReference>
<dbReference type="PANTHER" id="PTHR30075">
    <property type="entry name" value="GLYCYL-TRNA SYNTHETASE"/>
    <property type="match status" value="1"/>
</dbReference>
<dbReference type="Pfam" id="PF05746">
    <property type="entry name" value="DALR_1"/>
    <property type="match status" value="1"/>
</dbReference>
<dbReference type="Pfam" id="PF02092">
    <property type="entry name" value="tRNA_synt_2f"/>
    <property type="match status" value="1"/>
</dbReference>
<dbReference type="PRINTS" id="PR01045">
    <property type="entry name" value="TRNASYNTHGB"/>
</dbReference>
<dbReference type="SUPFAM" id="SSF109604">
    <property type="entry name" value="HD-domain/PDEase-like"/>
    <property type="match status" value="1"/>
</dbReference>
<dbReference type="PROSITE" id="PS50861">
    <property type="entry name" value="AA_TRNA_LIGASE_II_GLYAB"/>
    <property type="match status" value="1"/>
</dbReference>
<protein>
    <recommendedName>
        <fullName evidence="1">Glycine--tRNA ligase beta subunit</fullName>
        <ecNumber evidence="1">6.1.1.14</ecNumber>
    </recommendedName>
    <alternativeName>
        <fullName evidence="1">Glycyl-tRNA synthetase beta subunit</fullName>
        <shortName evidence="1">GlyRS</shortName>
    </alternativeName>
</protein>
<accession>Q328L9</accession>
<keyword id="KW-0030">Aminoacyl-tRNA synthetase</keyword>
<keyword id="KW-0067">ATP-binding</keyword>
<keyword id="KW-0963">Cytoplasm</keyword>
<keyword id="KW-0436">Ligase</keyword>
<keyword id="KW-0547">Nucleotide-binding</keyword>
<keyword id="KW-0648">Protein biosynthesis</keyword>
<keyword id="KW-1185">Reference proteome</keyword>
<name>SYGB_SHIDS</name>
<organism>
    <name type="scientific">Shigella dysenteriae serotype 1 (strain Sd197)</name>
    <dbReference type="NCBI Taxonomy" id="300267"/>
    <lineage>
        <taxon>Bacteria</taxon>
        <taxon>Pseudomonadati</taxon>
        <taxon>Pseudomonadota</taxon>
        <taxon>Gammaproteobacteria</taxon>
        <taxon>Enterobacterales</taxon>
        <taxon>Enterobacteriaceae</taxon>
        <taxon>Shigella</taxon>
    </lineage>
</organism>
<comment type="catalytic activity">
    <reaction evidence="1">
        <text>tRNA(Gly) + glycine + ATP = glycyl-tRNA(Gly) + AMP + diphosphate</text>
        <dbReference type="Rhea" id="RHEA:16013"/>
        <dbReference type="Rhea" id="RHEA-COMP:9664"/>
        <dbReference type="Rhea" id="RHEA-COMP:9683"/>
        <dbReference type="ChEBI" id="CHEBI:30616"/>
        <dbReference type="ChEBI" id="CHEBI:33019"/>
        <dbReference type="ChEBI" id="CHEBI:57305"/>
        <dbReference type="ChEBI" id="CHEBI:78442"/>
        <dbReference type="ChEBI" id="CHEBI:78522"/>
        <dbReference type="ChEBI" id="CHEBI:456215"/>
        <dbReference type="EC" id="6.1.1.14"/>
    </reaction>
</comment>
<comment type="subunit">
    <text evidence="1">Tetramer of two alpha and two beta subunits.</text>
</comment>
<comment type="subcellular location">
    <subcellularLocation>
        <location evidence="1">Cytoplasm</location>
    </subcellularLocation>
</comment>
<comment type="similarity">
    <text evidence="1">Belongs to the class-II aminoacyl-tRNA synthetase family.</text>
</comment>
<reference key="1">
    <citation type="journal article" date="2005" name="Nucleic Acids Res.">
        <title>Genome dynamics and diversity of Shigella species, the etiologic agents of bacillary dysentery.</title>
        <authorList>
            <person name="Yang F."/>
            <person name="Yang J."/>
            <person name="Zhang X."/>
            <person name="Chen L."/>
            <person name="Jiang Y."/>
            <person name="Yan Y."/>
            <person name="Tang X."/>
            <person name="Wang J."/>
            <person name="Xiong Z."/>
            <person name="Dong J."/>
            <person name="Xue Y."/>
            <person name="Zhu Y."/>
            <person name="Xu X."/>
            <person name="Sun L."/>
            <person name="Chen S."/>
            <person name="Nie H."/>
            <person name="Peng J."/>
            <person name="Xu J."/>
            <person name="Wang Y."/>
            <person name="Yuan Z."/>
            <person name="Wen Y."/>
            <person name="Yao Z."/>
            <person name="Shen Y."/>
            <person name="Qiang B."/>
            <person name="Hou Y."/>
            <person name="Yu J."/>
            <person name="Jin Q."/>
        </authorList>
    </citation>
    <scope>NUCLEOTIDE SEQUENCE [LARGE SCALE GENOMIC DNA]</scope>
    <source>
        <strain>Sd197</strain>
    </source>
</reference>
<feature type="chain" id="PRO_1000006412" description="Glycine--tRNA ligase beta subunit">
    <location>
        <begin position="1"/>
        <end position="689"/>
    </location>
</feature>
<sequence>MSEKTFLVEIGTEELPPKALRSLAESFAANFTAELDNAGLAHGTVQWFAAPRRLALKVANLAEAQPDREIEKRGPAIAQAFDAEGKPSKAAEGWARGCGITVDQAERLTTDKGEWLLYRAHVKGESTEALLPNMVATSLAKLPIPKLMRWGASDVHFVRPVHTVTLLLGDKVIPATILGIQSDRVIRGHRFMGEPEFAIDNADQYPEILRERGKVIADYEERKAKIKADAEEAARKIGGNADLSESLLEEVASLVEWPVVLTAKFEEKFLAVPSEALVYTMKGDQKYFPVYANDGKLLPNFIFVANIESKDQQQIISGNEKVVRPRLADAEFFFNTDRKKRLEDNLPRLQTVLFQLQLGTLRDKTDRIQALAGWIAEQIGADVNHATRAGLLSKCDLMTNMVFEFTDTQGVMGMHYARHDGEAEDVAVALNEQYQPRFAGDDLPSNPVACALAIADKMDTLAGIFGIGQHPKGDKDPFALRRAALGVLRIIVEKNLNLDLQTLTEEAVRLYGDKLTNANVVDDVIDFMLGRFRAWYQDEGYTVDTIQAVLARRPTRPADFDARMKAVSHFRTLEAAAALAAANKRVSNILAKSDEVLSDRVNASTLKEPEEIKLAMQVVVLRDKLEPYFAEGRYQDALVELAELREPVDAFFDKVMVMVDDKELRINRLTMLEKLRELFLRVADISLLQ</sequence>
<proteinExistence type="inferred from homology"/>